<keyword id="KW-0997">Cell inner membrane</keyword>
<keyword id="KW-1003">Cell membrane</keyword>
<keyword id="KW-0201">Cytochrome c-type biogenesis</keyword>
<keyword id="KW-0349">Heme</keyword>
<keyword id="KW-0408">Iron</keyword>
<keyword id="KW-0472">Membrane</keyword>
<keyword id="KW-0479">Metal-binding</keyword>
<keyword id="KW-1185">Reference proteome</keyword>
<keyword id="KW-0735">Signal-anchor</keyword>
<keyword id="KW-0812">Transmembrane</keyword>
<keyword id="KW-1133">Transmembrane helix</keyword>
<protein>
    <recommendedName>
        <fullName evidence="1">Cytochrome c-type biogenesis protein CcmE 1</fullName>
    </recommendedName>
    <alternativeName>
        <fullName evidence="1">Cytochrome c maturation protein E 1</fullName>
    </alternativeName>
    <alternativeName>
        <fullName evidence="1">Heme chaperone CcmE 1</fullName>
    </alternativeName>
</protein>
<gene>
    <name evidence="1" type="primary">ccmE1</name>
    <name evidence="1" type="synonym">cycJ1</name>
    <name type="ordered locus">XCC1660</name>
</gene>
<comment type="function">
    <text evidence="1">Heme chaperone required for the biogenesis of c-type cytochromes. Transiently binds heme delivered by CcmC and transfers the heme to apo-cytochromes in a process facilitated by CcmF and CcmH.</text>
</comment>
<comment type="subcellular location">
    <subcellularLocation>
        <location evidence="1">Cell inner membrane</location>
        <topology evidence="1">Single-pass type II membrane protein</topology>
        <orientation evidence="1">Periplasmic side</orientation>
    </subcellularLocation>
</comment>
<comment type="similarity">
    <text evidence="1">Belongs to the CcmE/CycJ family.</text>
</comment>
<proteinExistence type="inferred from homology"/>
<accession>Q8PA33</accession>
<reference key="1">
    <citation type="journal article" date="2002" name="Nature">
        <title>Comparison of the genomes of two Xanthomonas pathogens with differing host specificities.</title>
        <authorList>
            <person name="da Silva A.C.R."/>
            <person name="Ferro J.A."/>
            <person name="Reinach F.C."/>
            <person name="Farah C.S."/>
            <person name="Furlan L.R."/>
            <person name="Quaggio R.B."/>
            <person name="Monteiro-Vitorello C.B."/>
            <person name="Van Sluys M.A."/>
            <person name="Almeida N.F. Jr."/>
            <person name="Alves L.M.C."/>
            <person name="do Amaral A.M."/>
            <person name="Bertolini M.C."/>
            <person name="Camargo L.E.A."/>
            <person name="Camarotte G."/>
            <person name="Cannavan F."/>
            <person name="Cardozo J."/>
            <person name="Chambergo F."/>
            <person name="Ciapina L.P."/>
            <person name="Cicarelli R.M.B."/>
            <person name="Coutinho L.L."/>
            <person name="Cursino-Santos J.R."/>
            <person name="El-Dorry H."/>
            <person name="Faria J.B."/>
            <person name="Ferreira A.J.S."/>
            <person name="Ferreira R.C.C."/>
            <person name="Ferro M.I.T."/>
            <person name="Formighieri E.F."/>
            <person name="Franco M.C."/>
            <person name="Greggio C.C."/>
            <person name="Gruber A."/>
            <person name="Katsuyama A.M."/>
            <person name="Kishi L.T."/>
            <person name="Leite R.P."/>
            <person name="Lemos E.G.M."/>
            <person name="Lemos M.V.F."/>
            <person name="Locali E.C."/>
            <person name="Machado M.A."/>
            <person name="Madeira A.M.B.N."/>
            <person name="Martinez-Rossi N.M."/>
            <person name="Martins E.C."/>
            <person name="Meidanis J."/>
            <person name="Menck C.F.M."/>
            <person name="Miyaki C.Y."/>
            <person name="Moon D.H."/>
            <person name="Moreira L.M."/>
            <person name="Novo M.T.M."/>
            <person name="Okura V.K."/>
            <person name="Oliveira M.C."/>
            <person name="Oliveira V.R."/>
            <person name="Pereira H.A."/>
            <person name="Rossi A."/>
            <person name="Sena J.A.D."/>
            <person name="Silva C."/>
            <person name="de Souza R.F."/>
            <person name="Spinola L.A.F."/>
            <person name="Takita M.A."/>
            <person name="Tamura R.E."/>
            <person name="Teixeira E.C."/>
            <person name="Tezza R.I.D."/>
            <person name="Trindade dos Santos M."/>
            <person name="Truffi D."/>
            <person name="Tsai S.M."/>
            <person name="White F.F."/>
            <person name="Setubal J.C."/>
            <person name="Kitajima J.P."/>
        </authorList>
    </citation>
    <scope>NUCLEOTIDE SEQUENCE [LARGE SCALE GENOMIC DNA]</scope>
    <source>
        <strain>ATCC 33913 / DSM 3586 / NCPPB 528 / LMG 568 / P 25</strain>
    </source>
</reference>
<evidence type="ECO:0000255" key="1">
    <source>
        <dbReference type="HAMAP-Rule" id="MF_01959"/>
    </source>
</evidence>
<feature type="chain" id="PRO_0000238881" description="Cytochrome c-type biogenesis protein CcmE 1">
    <location>
        <begin position="1"/>
        <end position="156"/>
    </location>
</feature>
<feature type="topological domain" description="Cytoplasmic" evidence="1">
    <location>
        <begin position="1"/>
        <end position="8"/>
    </location>
</feature>
<feature type="transmembrane region" description="Helical; Signal-anchor for type II membrane protein" evidence="1">
    <location>
        <begin position="9"/>
        <end position="29"/>
    </location>
</feature>
<feature type="topological domain" description="Periplasmic" evidence="1">
    <location>
        <begin position="30"/>
        <end position="156"/>
    </location>
</feature>
<feature type="binding site" description="covalent" evidence="1">
    <location>
        <position position="123"/>
    </location>
    <ligand>
        <name>heme</name>
        <dbReference type="ChEBI" id="CHEBI:30413"/>
    </ligand>
</feature>
<feature type="binding site" description="axial binding residue" evidence="1">
    <location>
        <position position="127"/>
    </location>
    <ligand>
        <name>heme</name>
        <dbReference type="ChEBI" id="CHEBI:30413"/>
    </ligand>
    <ligandPart>
        <name>Fe</name>
        <dbReference type="ChEBI" id="CHEBI:18248"/>
    </ligandPart>
</feature>
<organism>
    <name type="scientific">Xanthomonas campestris pv. campestris (strain ATCC 33913 / DSM 3586 / NCPPB 528 / LMG 568 / P 25)</name>
    <dbReference type="NCBI Taxonomy" id="190485"/>
    <lineage>
        <taxon>Bacteria</taxon>
        <taxon>Pseudomonadati</taxon>
        <taxon>Pseudomonadota</taxon>
        <taxon>Gammaproteobacteria</taxon>
        <taxon>Lysobacterales</taxon>
        <taxon>Lysobacteraceae</taxon>
        <taxon>Xanthomonas</taxon>
    </lineage>
</organism>
<sequence length="156" mass="16753">MNATRKQRLWLVIGVLTAAALAVTLIALALQRNMSYLFTPSQVDAGAAAGYQQFRLGGMVKAGSIQRATDSLTVTFKVIDKHAATQVEYTGILPDLFRDNQSVIANGRMQAGRFVANEVLAKHDETYMPKELKDAMAEGHVGKPIPAAAAPLSGVR</sequence>
<name>CCME1_XANCP</name>
<dbReference type="EMBL" id="AE008922">
    <property type="protein sequence ID" value="AAM40954.1"/>
    <property type="molecule type" value="Genomic_DNA"/>
</dbReference>
<dbReference type="RefSeq" id="NP_637030.1">
    <property type="nucleotide sequence ID" value="NC_003902.1"/>
</dbReference>
<dbReference type="SMR" id="Q8PA33"/>
<dbReference type="STRING" id="190485.XCC1660"/>
<dbReference type="EnsemblBacteria" id="AAM40954">
    <property type="protein sequence ID" value="AAM40954"/>
    <property type="gene ID" value="XCC1660"/>
</dbReference>
<dbReference type="KEGG" id="xcc:XCC1660"/>
<dbReference type="PATRIC" id="fig|190485.4.peg.1772"/>
<dbReference type="eggNOG" id="COG2332">
    <property type="taxonomic scope" value="Bacteria"/>
</dbReference>
<dbReference type="HOGENOM" id="CLU_079503_1_1_6"/>
<dbReference type="OrthoDB" id="9793584at2"/>
<dbReference type="Proteomes" id="UP000001010">
    <property type="component" value="Chromosome"/>
</dbReference>
<dbReference type="GO" id="GO:0005886">
    <property type="term" value="C:plasma membrane"/>
    <property type="evidence" value="ECO:0007669"/>
    <property type="project" value="UniProtKB-SubCell"/>
</dbReference>
<dbReference type="GO" id="GO:0020037">
    <property type="term" value="F:heme binding"/>
    <property type="evidence" value="ECO:0007669"/>
    <property type="project" value="InterPro"/>
</dbReference>
<dbReference type="GO" id="GO:0046872">
    <property type="term" value="F:metal ion binding"/>
    <property type="evidence" value="ECO:0007669"/>
    <property type="project" value="UniProtKB-KW"/>
</dbReference>
<dbReference type="GO" id="GO:0017004">
    <property type="term" value="P:cytochrome complex assembly"/>
    <property type="evidence" value="ECO:0007669"/>
    <property type="project" value="UniProtKB-KW"/>
</dbReference>
<dbReference type="Gene3D" id="2.40.50.140">
    <property type="entry name" value="Nucleic acid-binding proteins"/>
    <property type="match status" value="1"/>
</dbReference>
<dbReference type="HAMAP" id="MF_01959">
    <property type="entry name" value="CcmE"/>
    <property type="match status" value="1"/>
</dbReference>
<dbReference type="InterPro" id="IPR004329">
    <property type="entry name" value="CcmE"/>
</dbReference>
<dbReference type="InterPro" id="IPR036127">
    <property type="entry name" value="CcmE-like_sf"/>
</dbReference>
<dbReference type="InterPro" id="IPR012340">
    <property type="entry name" value="NA-bd_OB-fold"/>
</dbReference>
<dbReference type="NCBIfam" id="NF009637">
    <property type="entry name" value="PRK13159.1"/>
    <property type="match status" value="1"/>
</dbReference>
<dbReference type="NCBIfam" id="NF009727">
    <property type="entry name" value="PRK13254.1-1"/>
    <property type="match status" value="1"/>
</dbReference>
<dbReference type="NCBIfam" id="NF009729">
    <property type="entry name" value="PRK13254.1-3"/>
    <property type="match status" value="1"/>
</dbReference>
<dbReference type="NCBIfam" id="NF009731">
    <property type="entry name" value="PRK13254.1-5"/>
    <property type="match status" value="1"/>
</dbReference>
<dbReference type="PANTHER" id="PTHR34128">
    <property type="entry name" value="CYTOCHROME C-TYPE BIOGENESIS PROTEIN CCME HOMOLOG, MITOCHONDRIAL"/>
    <property type="match status" value="1"/>
</dbReference>
<dbReference type="PANTHER" id="PTHR34128:SF2">
    <property type="entry name" value="CYTOCHROME C-TYPE BIOGENESIS PROTEIN CCME HOMOLOG, MITOCHONDRIAL"/>
    <property type="match status" value="1"/>
</dbReference>
<dbReference type="Pfam" id="PF03100">
    <property type="entry name" value="CcmE"/>
    <property type="match status" value="1"/>
</dbReference>
<dbReference type="SUPFAM" id="SSF82093">
    <property type="entry name" value="Heme chaperone CcmE"/>
    <property type="match status" value="1"/>
</dbReference>